<evidence type="ECO:0000256" key="1">
    <source>
        <dbReference type="SAM" id="MobiDB-lite"/>
    </source>
</evidence>
<accession>P26160</accession>
<name>YPU4_RHOCA</name>
<reference key="1">
    <citation type="submission" date="1991-11" db="EMBL/GenBank/DDBJ databases">
        <authorList>
            <person name="Burke D.H."/>
            <person name="Alberti M."/>
            <person name="Armstrong G.A."/>
            <person name="Hearst J.E."/>
        </authorList>
    </citation>
    <scope>NUCLEOTIDE SEQUENCE [GENOMIC DNA]</scope>
</reference>
<proteinExistence type="predicted"/>
<feature type="chain" id="PRO_0000066422" description="Uncharacterized 17.4 kDa protein in puhA 5'region">
    <location>
        <begin position="1"/>
        <end position="162"/>
    </location>
</feature>
<feature type="region of interest" description="Disordered" evidence="1">
    <location>
        <begin position="1"/>
        <end position="23"/>
    </location>
</feature>
<feature type="compositionally biased region" description="Basic and acidic residues" evidence="1">
    <location>
        <begin position="13"/>
        <end position="23"/>
    </location>
</feature>
<protein>
    <recommendedName>
        <fullName>Uncharacterized 17.4 kDa protein in puhA 5'region</fullName>
    </recommendedName>
    <alternativeName>
        <fullName>ORF162B</fullName>
    </alternativeName>
</protein>
<organism>
    <name type="scientific">Rhodobacter capsulatus</name>
    <name type="common">Rhodopseudomonas capsulata</name>
    <dbReference type="NCBI Taxonomy" id="1061"/>
    <lineage>
        <taxon>Bacteria</taxon>
        <taxon>Pseudomonadati</taxon>
        <taxon>Pseudomonadota</taxon>
        <taxon>Alphaproteobacteria</taxon>
        <taxon>Rhodobacterales</taxon>
        <taxon>Rhodobacter group</taxon>
        <taxon>Rhodobacter</taxon>
    </lineage>
</organism>
<dbReference type="EMBL" id="Z11165">
    <property type="protein sequence ID" value="CAA77518.1"/>
    <property type="molecule type" value="Genomic_DNA"/>
</dbReference>
<dbReference type="PIR" id="S17806">
    <property type="entry name" value="S17806"/>
</dbReference>
<dbReference type="OMA" id="PRIMVRI"/>
<dbReference type="InterPro" id="IPR017495">
    <property type="entry name" value="PuhC"/>
</dbReference>
<dbReference type="NCBIfam" id="TIGR03054">
    <property type="entry name" value="photo_alph_chp1"/>
    <property type="match status" value="1"/>
</dbReference>
<sequence length="162" mass="17414">MAQLPLSPAPQRPETKTPGKPEAELIPKPLLRAMIGIALLSLALTTYAVLTGRPHEGVPAPGKVVAEKLVVLKDIDARHATVSDPEGNILLDLPEGGFVDVMAAAVRRSRAVARITDNPPVRIVRYDNGRLAMEDPATGWSTELYAFGADSKAAFERILDMK</sequence>